<reference key="1">
    <citation type="journal article" date="2002" name="Proc. Natl. Acad. Sci. U.S.A.">
        <title>The Brucella suis genome reveals fundamental similarities between animal and plant pathogens and symbionts.</title>
        <authorList>
            <person name="Paulsen I.T."/>
            <person name="Seshadri R."/>
            <person name="Nelson K.E."/>
            <person name="Eisen J.A."/>
            <person name="Heidelberg J.F."/>
            <person name="Read T.D."/>
            <person name="Dodson R.J."/>
            <person name="Umayam L.A."/>
            <person name="Brinkac L.M."/>
            <person name="Beanan M.J."/>
            <person name="Daugherty S.C."/>
            <person name="DeBoy R.T."/>
            <person name="Durkin A.S."/>
            <person name="Kolonay J.F."/>
            <person name="Madupu R."/>
            <person name="Nelson W.C."/>
            <person name="Ayodeji B."/>
            <person name="Kraul M."/>
            <person name="Shetty J."/>
            <person name="Malek J.A."/>
            <person name="Van Aken S.E."/>
            <person name="Riedmuller S."/>
            <person name="Tettelin H."/>
            <person name="Gill S.R."/>
            <person name="White O."/>
            <person name="Salzberg S.L."/>
            <person name="Hoover D.L."/>
            <person name="Lindler L.E."/>
            <person name="Halling S.M."/>
            <person name="Boyle S.M."/>
            <person name="Fraser C.M."/>
        </authorList>
    </citation>
    <scope>NUCLEOTIDE SEQUENCE [LARGE SCALE GENOMIC DNA]</scope>
    <source>
        <strain>1330</strain>
    </source>
</reference>
<reference key="2">
    <citation type="journal article" date="2011" name="J. Bacteriol.">
        <title>Revised genome sequence of Brucella suis 1330.</title>
        <authorList>
            <person name="Tae H."/>
            <person name="Shallom S."/>
            <person name="Settlage R."/>
            <person name="Preston D."/>
            <person name="Adams L.G."/>
            <person name="Garner H.R."/>
        </authorList>
    </citation>
    <scope>NUCLEOTIDE SEQUENCE [LARGE SCALE GENOMIC DNA]</scope>
    <source>
        <strain>1330</strain>
    </source>
</reference>
<feature type="chain" id="PRO_0000140562" description="Chorismate synthase">
    <location>
        <begin position="1"/>
        <end position="364"/>
    </location>
</feature>
<feature type="binding site" evidence="1">
    <location>
        <position position="48"/>
    </location>
    <ligand>
        <name>NADP(+)</name>
        <dbReference type="ChEBI" id="CHEBI:58349"/>
    </ligand>
</feature>
<feature type="binding site" evidence="1">
    <location>
        <begin position="131"/>
        <end position="133"/>
    </location>
    <ligand>
        <name>FMN</name>
        <dbReference type="ChEBI" id="CHEBI:58210"/>
    </ligand>
</feature>
<feature type="binding site" evidence="1">
    <location>
        <begin position="243"/>
        <end position="244"/>
    </location>
    <ligand>
        <name>FMN</name>
        <dbReference type="ChEBI" id="CHEBI:58210"/>
    </ligand>
</feature>
<feature type="binding site" evidence="1">
    <location>
        <position position="288"/>
    </location>
    <ligand>
        <name>FMN</name>
        <dbReference type="ChEBI" id="CHEBI:58210"/>
    </ligand>
</feature>
<feature type="binding site" evidence="1">
    <location>
        <begin position="303"/>
        <end position="307"/>
    </location>
    <ligand>
        <name>FMN</name>
        <dbReference type="ChEBI" id="CHEBI:58210"/>
    </ligand>
</feature>
<feature type="binding site" evidence="1">
    <location>
        <position position="329"/>
    </location>
    <ligand>
        <name>FMN</name>
        <dbReference type="ChEBI" id="CHEBI:58210"/>
    </ligand>
</feature>
<proteinExistence type="inferred from homology"/>
<accession>P63608</accession>
<accession>G0K6P7</accession>
<accession>Q8G299</accession>
<accession>Q8YFL4</accession>
<comment type="function">
    <text evidence="1">Catalyzes the anti-1,4-elimination of the C-3 phosphate and the C-6 proR hydrogen from 5-enolpyruvylshikimate-3-phosphate (EPSP) to yield chorismate, which is the branch point compound that serves as the starting substrate for the three terminal pathways of aromatic amino acid biosynthesis. This reaction introduces a second double bond into the aromatic ring system.</text>
</comment>
<comment type="catalytic activity">
    <reaction evidence="1">
        <text>5-O-(1-carboxyvinyl)-3-phosphoshikimate = chorismate + phosphate</text>
        <dbReference type="Rhea" id="RHEA:21020"/>
        <dbReference type="ChEBI" id="CHEBI:29748"/>
        <dbReference type="ChEBI" id="CHEBI:43474"/>
        <dbReference type="ChEBI" id="CHEBI:57701"/>
        <dbReference type="EC" id="4.2.3.5"/>
    </reaction>
</comment>
<comment type="cofactor">
    <cofactor evidence="1">
        <name>FMNH2</name>
        <dbReference type="ChEBI" id="CHEBI:57618"/>
    </cofactor>
    <text evidence="1">Reduced FMN (FMNH(2)).</text>
</comment>
<comment type="pathway">
    <text evidence="1">Metabolic intermediate biosynthesis; chorismate biosynthesis; chorismate from D-erythrose 4-phosphate and phosphoenolpyruvate: step 7/7.</text>
</comment>
<comment type="subunit">
    <text evidence="1">Homotetramer.</text>
</comment>
<comment type="similarity">
    <text evidence="1">Belongs to the chorismate synthase family.</text>
</comment>
<evidence type="ECO:0000255" key="1">
    <source>
        <dbReference type="HAMAP-Rule" id="MF_00300"/>
    </source>
</evidence>
<organism>
    <name type="scientific">Brucella suis biovar 1 (strain 1330)</name>
    <dbReference type="NCBI Taxonomy" id="204722"/>
    <lineage>
        <taxon>Bacteria</taxon>
        <taxon>Pseudomonadati</taxon>
        <taxon>Pseudomonadota</taxon>
        <taxon>Alphaproteobacteria</taxon>
        <taxon>Hyphomicrobiales</taxon>
        <taxon>Brucellaceae</taxon>
        <taxon>Brucella/Ochrobactrum group</taxon>
        <taxon>Brucella</taxon>
    </lineage>
</organism>
<dbReference type="EC" id="4.2.3.5" evidence="1"/>
<dbReference type="EMBL" id="AE014291">
    <property type="protein sequence ID" value="AAN29371.1"/>
    <property type="molecule type" value="Genomic_DNA"/>
</dbReference>
<dbReference type="EMBL" id="CP002997">
    <property type="protein sequence ID" value="AEM17784.1"/>
    <property type="molecule type" value="Genomic_DNA"/>
</dbReference>
<dbReference type="RefSeq" id="WP_002963585.1">
    <property type="nucleotide sequence ID" value="NZ_KN046804.1"/>
</dbReference>
<dbReference type="SMR" id="P63608"/>
<dbReference type="GeneID" id="97534201"/>
<dbReference type="KEGG" id="bms:BR0428"/>
<dbReference type="KEGG" id="bsi:BS1330_I0429"/>
<dbReference type="PATRIC" id="fig|204722.22.peg.1415"/>
<dbReference type="HOGENOM" id="CLU_034547_0_0_5"/>
<dbReference type="PhylomeDB" id="P63608"/>
<dbReference type="UniPathway" id="UPA00053">
    <property type="reaction ID" value="UER00090"/>
</dbReference>
<dbReference type="PRO" id="PR:P63608"/>
<dbReference type="Proteomes" id="UP000007104">
    <property type="component" value="Chromosome I"/>
</dbReference>
<dbReference type="GO" id="GO:0005829">
    <property type="term" value="C:cytosol"/>
    <property type="evidence" value="ECO:0007669"/>
    <property type="project" value="TreeGrafter"/>
</dbReference>
<dbReference type="GO" id="GO:0004107">
    <property type="term" value="F:chorismate synthase activity"/>
    <property type="evidence" value="ECO:0007669"/>
    <property type="project" value="UniProtKB-UniRule"/>
</dbReference>
<dbReference type="GO" id="GO:0010181">
    <property type="term" value="F:FMN binding"/>
    <property type="evidence" value="ECO:0007669"/>
    <property type="project" value="TreeGrafter"/>
</dbReference>
<dbReference type="GO" id="GO:0008652">
    <property type="term" value="P:amino acid biosynthetic process"/>
    <property type="evidence" value="ECO:0007669"/>
    <property type="project" value="UniProtKB-KW"/>
</dbReference>
<dbReference type="GO" id="GO:0009073">
    <property type="term" value="P:aromatic amino acid family biosynthetic process"/>
    <property type="evidence" value="ECO:0007669"/>
    <property type="project" value="UniProtKB-KW"/>
</dbReference>
<dbReference type="GO" id="GO:0009423">
    <property type="term" value="P:chorismate biosynthetic process"/>
    <property type="evidence" value="ECO:0007669"/>
    <property type="project" value="UniProtKB-UniRule"/>
</dbReference>
<dbReference type="CDD" id="cd07304">
    <property type="entry name" value="Chorismate_synthase"/>
    <property type="match status" value="1"/>
</dbReference>
<dbReference type="Gene3D" id="3.60.150.10">
    <property type="entry name" value="Chorismate synthase AroC"/>
    <property type="match status" value="1"/>
</dbReference>
<dbReference type="HAMAP" id="MF_00300">
    <property type="entry name" value="Chorismate_synth"/>
    <property type="match status" value="1"/>
</dbReference>
<dbReference type="InterPro" id="IPR000453">
    <property type="entry name" value="Chorismate_synth"/>
</dbReference>
<dbReference type="InterPro" id="IPR035904">
    <property type="entry name" value="Chorismate_synth_AroC_sf"/>
</dbReference>
<dbReference type="InterPro" id="IPR020541">
    <property type="entry name" value="Chorismate_synthase_CS"/>
</dbReference>
<dbReference type="NCBIfam" id="TIGR00033">
    <property type="entry name" value="aroC"/>
    <property type="match status" value="1"/>
</dbReference>
<dbReference type="NCBIfam" id="NF003793">
    <property type="entry name" value="PRK05382.1"/>
    <property type="match status" value="1"/>
</dbReference>
<dbReference type="PANTHER" id="PTHR21085">
    <property type="entry name" value="CHORISMATE SYNTHASE"/>
    <property type="match status" value="1"/>
</dbReference>
<dbReference type="PANTHER" id="PTHR21085:SF0">
    <property type="entry name" value="CHORISMATE SYNTHASE"/>
    <property type="match status" value="1"/>
</dbReference>
<dbReference type="Pfam" id="PF01264">
    <property type="entry name" value="Chorismate_synt"/>
    <property type="match status" value="1"/>
</dbReference>
<dbReference type="PIRSF" id="PIRSF001456">
    <property type="entry name" value="Chorismate_synth"/>
    <property type="match status" value="1"/>
</dbReference>
<dbReference type="SUPFAM" id="SSF103263">
    <property type="entry name" value="Chorismate synthase, AroC"/>
    <property type="match status" value="1"/>
</dbReference>
<dbReference type="PROSITE" id="PS00787">
    <property type="entry name" value="CHORISMATE_SYNTHASE_1"/>
    <property type="match status" value="1"/>
</dbReference>
<dbReference type="PROSITE" id="PS00788">
    <property type="entry name" value="CHORISMATE_SYNTHASE_2"/>
    <property type="match status" value="1"/>
</dbReference>
<dbReference type="PROSITE" id="PS00789">
    <property type="entry name" value="CHORISMATE_SYNTHASE_3"/>
    <property type="match status" value="1"/>
</dbReference>
<gene>
    <name evidence="1" type="primary">aroC</name>
    <name type="ordered locus">BR0428</name>
    <name type="ordered locus">BS1330_I0429</name>
</gene>
<protein>
    <recommendedName>
        <fullName evidence="1">Chorismate synthase</fullName>
        <shortName evidence="1">CS</shortName>
        <ecNumber evidence="1">4.2.3.5</ecNumber>
    </recommendedName>
    <alternativeName>
        <fullName evidence="1">5-enolpyruvylshikimate-3-phosphate phospholyase</fullName>
    </alternativeName>
</protein>
<keyword id="KW-0028">Amino-acid biosynthesis</keyword>
<keyword id="KW-0057">Aromatic amino acid biosynthesis</keyword>
<keyword id="KW-0274">FAD</keyword>
<keyword id="KW-0285">Flavoprotein</keyword>
<keyword id="KW-0288">FMN</keyword>
<keyword id="KW-0456">Lyase</keyword>
<keyword id="KW-0521">NADP</keyword>
<sequence>MSHNSFGHLFRVTTWGESHGLALGCVVDGCPPGITFTEAEIQSFLDKRKPGQSKYTTQRREPDQVRVLSGVLLGEDGVTMTTTGTPISMMIENTDQRSKDYGEIARQYRPGHADYAYDVKYGIRDYRGGGRSSARETAARVAAGAIARKVVPGLEVRGALVSIGAHDIDRSRWNWAEVDNNPFFTPDAGSVEVFADYLDGIRKNGSSVGAIIEIVAEGVPAGIGAPIYGKLDQDIASYLMSINAVKGVEIGNGFEAARLTGEENADEMRMGNDGKPIFLSNHAGGVLGGIATGAPVVARFAVKPTSSILTPRRSIDKDGNEVDVMTRGRHDPCVGIRAVPIGEAMVACAIADHYLRHRGQTGRV</sequence>
<name>AROC_BRUSU</name>